<name>PTHP_SHIFL</name>
<evidence type="ECO:0000250" key="1"/>
<evidence type="ECO:0000255" key="2">
    <source>
        <dbReference type="PROSITE-ProRule" id="PRU00681"/>
    </source>
</evidence>
<evidence type="ECO:0000305" key="3"/>
<keyword id="KW-0963">Cytoplasm</keyword>
<keyword id="KW-0598">Phosphotransferase system</keyword>
<keyword id="KW-1185">Reference proteome</keyword>
<keyword id="KW-0762">Sugar transport</keyword>
<keyword id="KW-0813">Transport</keyword>
<organism>
    <name type="scientific">Shigella flexneri</name>
    <dbReference type="NCBI Taxonomy" id="623"/>
    <lineage>
        <taxon>Bacteria</taxon>
        <taxon>Pseudomonadati</taxon>
        <taxon>Pseudomonadota</taxon>
        <taxon>Gammaproteobacteria</taxon>
        <taxon>Enterobacterales</taxon>
        <taxon>Enterobacteriaceae</taxon>
        <taxon>Shigella</taxon>
    </lineage>
</organism>
<reference key="1">
    <citation type="journal article" date="2002" name="Nucleic Acids Res.">
        <title>Genome sequence of Shigella flexneri 2a: insights into pathogenicity through comparison with genomes of Escherichia coli K12 and O157.</title>
        <authorList>
            <person name="Jin Q."/>
            <person name="Yuan Z."/>
            <person name="Xu J."/>
            <person name="Wang Y."/>
            <person name="Shen Y."/>
            <person name="Lu W."/>
            <person name="Wang J."/>
            <person name="Liu H."/>
            <person name="Yang J."/>
            <person name="Yang F."/>
            <person name="Zhang X."/>
            <person name="Zhang J."/>
            <person name="Yang G."/>
            <person name="Wu H."/>
            <person name="Qu D."/>
            <person name="Dong J."/>
            <person name="Sun L."/>
            <person name="Xue Y."/>
            <person name="Zhao A."/>
            <person name="Gao Y."/>
            <person name="Zhu J."/>
            <person name="Kan B."/>
            <person name="Ding K."/>
            <person name="Chen S."/>
            <person name="Cheng H."/>
            <person name="Yao Z."/>
            <person name="He B."/>
            <person name="Chen R."/>
            <person name="Ma D."/>
            <person name="Qiang B."/>
            <person name="Wen Y."/>
            <person name="Hou Y."/>
            <person name="Yu J."/>
        </authorList>
    </citation>
    <scope>NUCLEOTIDE SEQUENCE [LARGE SCALE GENOMIC DNA]</scope>
    <source>
        <strain>301 / Serotype 2a</strain>
    </source>
</reference>
<reference key="2">
    <citation type="journal article" date="2003" name="Infect. Immun.">
        <title>Complete genome sequence and comparative genomics of Shigella flexneri serotype 2a strain 2457T.</title>
        <authorList>
            <person name="Wei J."/>
            <person name="Goldberg M.B."/>
            <person name="Burland V."/>
            <person name="Venkatesan M.M."/>
            <person name="Deng W."/>
            <person name="Fournier G."/>
            <person name="Mayhew G.F."/>
            <person name="Plunkett G. III"/>
            <person name="Rose D.J."/>
            <person name="Darling A."/>
            <person name="Mau B."/>
            <person name="Perna N.T."/>
            <person name="Payne S.M."/>
            <person name="Runyen-Janecky L.J."/>
            <person name="Zhou S."/>
            <person name="Schwartz D.C."/>
            <person name="Blattner F.R."/>
        </authorList>
    </citation>
    <scope>NUCLEOTIDE SEQUENCE [LARGE SCALE GENOMIC DNA]</scope>
    <source>
        <strain>ATCC 700930 / 2457T / Serotype 2a</strain>
    </source>
</reference>
<sequence>MFQQEVTITAPNGLHTRPAAQFVKEAKGFTSEITVTSNGKSASAKSLFKLQTLGLTQGTVVTISAEGEDEQKAVEHLVKLMAELE</sequence>
<protein>
    <recommendedName>
        <fullName>Phosphocarrier protein HPr</fullName>
    </recommendedName>
    <alternativeName>
        <fullName>Histidine-containing protein</fullName>
    </alternativeName>
</protein>
<dbReference type="EMBL" id="AE005674">
    <property type="protein sequence ID" value="AAN43977.1"/>
    <property type="molecule type" value="Genomic_DNA"/>
</dbReference>
<dbReference type="EMBL" id="AE014073">
    <property type="protein sequence ID" value="AAP17790.1"/>
    <property type="molecule type" value="Genomic_DNA"/>
</dbReference>
<dbReference type="RefSeq" id="NP_708270.1">
    <property type="nucleotide sequence ID" value="NC_004337.2"/>
</dbReference>
<dbReference type="RefSeq" id="WP_000487600.1">
    <property type="nucleotide sequence ID" value="NZ_WPGW01000027.1"/>
</dbReference>
<dbReference type="SMR" id="P0AA09"/>
<dbReference type="STRING" id="198214.SF2470"/>
<dbReference type="PaxDb" id="198214-SF2470"/>
<dbReference type="GeneID" id="1026874"/>
<dbReference type="GeneID" id="97602767"/>
<dbReference type="KEGG" id="sfl:SF2470"/>
<dbReference type="KEGG" id="sfx:S2616"/>
<dbReference type="PATRIC" id="fig|198214.7.peg.2951"/>
<dbReference type="HOGENOM" id="CLU_136230_2_3_6"/>
<dbReference type="Proteomes" id="UP000001006">
    <property type="component" value="Chromosome"/>
</dbReference>
<dbReference type="Proteomes" id="UP000002673">
    <property type="component" value="Chromosome"/>
</dbReference>
<dbReference type="GO" id="GO:0005737">
    <property type="term" value="C:cytoplasm"/>
    <property type="evidence" value="ECO:0007669"/>
    <property type="project" value="UniProtKB-SubCell"/>
</dbReference>
<dbReference type="GO" id="GO:0009401">
    <property type="term" value="P:phosphoenolpyruvate-dependent sugar phosphotransferase system"/>
    <property type="evidence" value="ECO:0007669"/>
    <property type="project" value="UniProtKB-KW"/>
</dbReference>
<dbReference type="CDD" id="cd00367">
    <property type="entry name" value="PTS-HPr_like"/>
    <property type="match status" value="1"/>
</dbReference>
<dbReference type="FunFam" id="3.30.1340.10:FF:000001">
    <property type="entry name" value="Phosphocarrier, HPr family"/>
    <property type="match status" value="1"/>
</dbReference>
<dbReference type="Gene3D" id="3.30.1340.10">
    <property type="entry name" value="HPr-like"/>
    <property type="match status" value="1"/>
</dbReference>
<dbReference type="InterPro" id="IPR050399">
    <property type="entry name" value="HPr"/>
</dbReference>
<dbReference type="InterPro" id="IPR000032">
    <property type="entry name" value="HPr-like"/>
</dbReference>
<dbReference type="InterPro" id="IPR035895">
    <property type="entry name" value="HPr-like_sf"/>
</dbReference>
<dbReference type="InterPro" id="IPR001020">
    <property type="entry name" value="PTS_HPr_His_P_site"/>
</dbReference>
<dbReference type="InterPro" id="IPR002114">
    <property type="entry name" value="PTS_HPr_Ser_P_site"/>
</dbReference>
<dbReference type="NCBIfam" id="NF008104">
    <property type="entry name" value="PRK10850.1"/>
    <property type="match status" value="1"/>
</dbReference>
<dbReference type="NCBIfam" id="TIGR01003">
    <property type="entry name" value="PTS_HPr_family"/>
    <property type="match status" value="1"/>
</dbReference>
<dbReference type="PANTHER" id="PTHR33705">
    <property type="entry name" value="PHOSPHOCARRIER PROTEIN HPR"/>
    <property type="match status" value="1"/>
</dbReference>
<dbReference type="PANTHER" id="PTHR33705:SF1">
    <property type="entry name" value="PHOSPHOCARRIER PROTEIN HPR"/>
    <property type="match status" value="1"/>
</dbReference>
<dbReference type="Pfam" id="PF00381">
    <property type="entry name" value="PTS-HPr"/>
    <property type="match status" value="1"/>
</dbReference>
<dbReference type="PRINTS" id="PR00107">
    <property type="entry name" value="PHOSPHOCPHPR"/>
</dbReference>
<dbReference type="SUPFAM" id="SSF55594">
    <property type="entry name" value="HPr-like"/>
    <property type="match status" value="1"/>
</dbReference>
<dbReference type="PROSITE" id="PS51350">
    <property type="entry name" value="PTS_HPR_DOM"/>
    <property type="match status" value="1"/>
</dbReference>
<dbReference type="PROSITE" id="PS00369">
    <property type="entry name" value="PTS_HPR_HIS"/>
    <property type="match status" value="1"/>
</dbReference>
<dbReference type="PROSITE" id="PS00589">
    <property type="entry name" value="PTS_HPR_SER"/>
    <property type="match status" value="1"/>
</dbReference>
<gene>
    <name type="primary">ptsH</name>
    <name type="ordered locus">SF2470</name>
    <name type="ordered locus">S2616</name>
</gene>
<feature type="chain" id="PRO_0000107871" description="Phosphocarrier protein HPr">
    <location>
        <begin position="1"/>
        <end position="85"/>
    </location>
</feature>
<feature type="domain" description="HPr" evidence="2">
    <location>
        <begin position="1"/>
        <end position="85"/>
    </location>
</feature>
<feature type="active site" description="Pros-phosphohistidine intermediate" evidence="2">
    <location>
        <position position="15"/>
    </location>
</feature>
<proteinExistence type="inferred from homology"/>
<accession>P0AA09</accession>
<accession>P05525</accession>
<accession>P07006</accession>
<comment type="function">
    <text evidence="1">General (non sugar-specific) component of the phosphoenolpyruvate-dependent sugar phosphotransferase system (sugar PTS). This major carbohydrate active-transport system catalyzes the phosphorylation of incoming sugar substrates concomitantly with their translocation across the cell membrane. The phosphoryl group from phosphoenolpyruvate (PEP) is transferred to the phosphoryl carrier protein HPr by enzyme I. Phospho-HPr then transfers it to the PTS EIIA domain.</text>
</comment>
<comment type="subcellular location">
    <subcellularLocation>
        <location evidence="1">Cytoplasm</location>
    </subcellularLocation>
</comment>
<comment type="similarity">
    <text evidence="3">Belongs to the HPr family.</text>
</comment>